<gene>
    <name evidence="1" type="primary">argH</name>
    <name type="ordered locus">BAV1635</name>
</gene>
<evidence type="ECO:0000255" key="1">
    <source>
        <dbReference type="HAMAP-Rule" id="MF_00006"/>
    </source>
</evidence>
<dbReference type="EC" id="4.3.2.1" evidence="1"/>
<dbReference type="EMBL" id="AM167904">
    <property type="protein sequence ID" value="CAJ49244.1"/>
    <property type="molecule type" value="Genomic_DNA"/>
</dbReference>
<dbReference type="RefSeq" id="WP_012417306.1">
    <property type="nucleotide sequence ID" value="NC_010645.1"/>
</dbReference>
<dbReference type="SMR" id="Q2L1J6"/>
<dbReference type="STRING" id="360910.BAV1635"/>
<dbReference type="GeneID" id="92935303"/>
<dbReference type="KEGG" id="bav:BAV1635"/>
<dbReference type="eggNOG" id="COG0165">
    <property type="taxonomic scope" value="Bacteria"/>
</dbReference>
<dbReference type="HOGENOM" id="CLU_027272_2_3_4"/>
<dbReference type="OrthoDB" id="9769623at2"/>
<dbReference type="UniPathway" id="UPA00068">
    <property type="reaction ID" value="UER00114"/>
</dbReference>
<dbReference type="Proteomes" id="UP000001977">
    <property type="component" value="Chromosome"/>
</dbReference>
<dbReference type="GO" id="GO:0005829">
    <property type="term" value="C:cytosol"/>
    <property type="evidence" value="ECO:0007669"/>
    <property type="project" value="TreeGrafter"/>
</dbReference>
<dbReference type="GO" id="GO:0004056">
    <property type="term" value="F:argininosuccinate lyase activity"/>
    <property type="evidence" value="ECO:0007669"/>
    <property type="project" value="UniProtKB-UniRule"/>
</dbReference>
<dbReference type="GO" id="GO:0042450">
    <property type="term" value="P:arginine biosynthetic process via ornithine"/>
    <property type="evidence" value="ECO:0007669"/>
    <property type="project" value="InterPro"/>
</dbReference>
<dbReference type="GO" id="GO:0006526">
    <property type="term" value="P:L-arginine biosynthetic process"/>
    <property type="evidence" value="ECO:0007669"/>
    <property type="project" value="UniProtKB-UniRule"/>
</dbReference>
<dbReference type="CDD" id="cd01359">
    <property type="entry name" value="Argininosuccinate_lyase"/>
    <property type="match status" value="1"/>
</dbReference>
<dbReference type="FunFam" id="1.10.275.10:FF:000002">
    <property type="entry name" value="Argininosuccinate lyase"/>
    <property type="match status" value="1"/>
</dbReference>
<dbReference type="FunFam" id="1.10.40.30:FF:000001">
    <property type="entry name" value="Argininosuccinate lyase"/>
    <property type="match status" value="1"/>
</dbReference>
<dbReference type="FunFam" id="1.20.200.10:FF:000015">
    <property type="entry name" value="argininosuccinate lyase isoform X2"/>
    <property type="match status" value="1"/>
</dbReference>
<dbReference type="Gene3D" id="1.10.40.30">
    <property type="entry name" value="Fumarase/aspartase (C-terminal domain)"/>
    <property type="match status" value="1"/>
</dbReference>
<dbReference type="Gene3D" id="1.20.200.10">
    <property type="entry name" value="Fumarase/aspartase (Central domain)"/>
    <property type="match status" value="1"/>
</dbReference>
<dbReference type="Gene3D" id="1.10.275.10">
    <property type="entry name" value="Fumarase/aspartase (N-terminal domain)"/>
    <property type="match status" value="1"/>
</dbReference>
<dbReference type="HAMAP" id="MF_00006">
    <property type="entry name" value="Arg_succ_lyase"/>
    <property type="match status" value="1"/>
</dbReference>
<dbReference type="InterPro" id="IPR029419">
    <property type="entry name" value="Arg_succ_lyase_C"/>
</dbReference>
<dbReference type="InterPro" id="IPR009049">
    <property type="entry name" value="Argininosuccinate_lyase"/>
</dbReference>
<dbReference type="InterPro" id="IPR024083">
    <property type="entry name" value="Fumarase/histidase_N"/>
</dbReference>
<dbReference type="InterPro" id="IPR020557">
    <property type="entry name" value="Fumarate_lyase_CS"/>
</dbReference>
<dbReference type="InterPro" id="IPR000362">
    <property type="entry name" value="Fumarate_lyase_fam"/>
</dbReference>
<dbReference type="InterPro" id="IPR022761">
    <property type="entry name" value="Fumarate_lyase_N"/>
</dbReference>
<dbReference type="InterPro" id="IPR008948">
    <property type="entry name" value="L-Aspartase-like"/>
</dbReference>
<dbReference type="NCBIfam" id="TIGR00838">
    <property type="entry name" value="argH"/>
    <property type="match status" value="1"/>
</dbReference>
<dbReference type="PANTHER" id="PTHR43814">
    <property type="entry name" value="ARGININOSUCCINATE LYASE"/>
    <property type="match status" value="1"/>
</dbReference>
<dbReference type="PANTHER" id="PTHR43814:SF1">
    <property type="entry name" value="ARGININOSUCCINATE LYASE"/>
    <property type="match status" value="1"/>
</dbReference>
<dbReference type="Pfam" id="PF14698">
    <property type="entry name" value="ASL_C2"/>
    <property type="match status" value="1"/>
</dbReference>
<dbReference type="Pfam" id="PF00206">
    <property type="entry name" value="Lyase_1"/>
    <property type="match status" value="1"/>
</dbReference>
<dbReference type="PRINTS" id="PR00145">
    <property type="entry name" value="ARGSUCLYASE"/>
</dbReference>
<dbReference type="PRINTS" id="PR00149">
    <property type="entry name" value="FUMRATELYASE"/>
</dbReference>
<dbReference type="SUPFAM" id="SSF48557">
    <property type="entry name" value="L-aspartase-like"/>
    <property type="match status" value="1"/>
</dbReference>
<dbReference type="PROSITE" id="PS00163">
    <property type="entry name" value="FUMARATE_LYASES"/>
    <property type="match status" value="1"/>
</dbReference>
<sequence length="470" mass="51763">MANTPSQQDQFANKAQAWSARFSEPVSDLVKRYTASVDFDKRLARHDIRGSLAHADMLAAQGIISAQDLADIERGMQQILSEIDAGSFQWLLDLEDVHLNIEKRLVELVGDAGKRLHTGRSRNDQVATDIRLWLRDEIDLLIDLLRQLRHALATVALDNAGTIMPGFTHLQVAQPVTFGHHLLAYAEMFGRDAERLADCRKRVNRLPLGAAALAGTSYPIDRERVASTLGFDGVCRNSLDAVSDRDFAIEFCAAASLIMTHVSRLSEELVLWMSPRVGFIDLADRFCTGSSIMPQKKNPDVPELARGKTGRVNGHLVALLTLMKGQPLAYNKDNQEDKEGLFDTADTLRDTLTIFADMAGGIKVKADNMRAAALQGFATATDLADYLVKRGLPFRDAHEVVAHAVRDCEQRGCDLADLSLAELQAYHPSIEADIHQVLTLEGSVAARKHTGGTAPERVREEAQRVIQETA</sequence>
<keyword id="KW-0028">Amino-acid biosynthesis</keyword>
<keyword id="KW-0055">Arginine biosynthesis</keyword>
<keyword id="KW-0963">Cytoplasm</keyword>
<keyword id="KW-0456">Lyase</keyword>
<keyword id="KW-1185">Reference proteome</keyword>
<name>ARLY_BORA1</name>
<proteinExistence type="inferred from homology"/>
<organism>
    <name type="scientific">Bordetella avium (strain 197N)</name>
    <dbReference type="NCBI Taxonomy" id="360910"/>
    <lineage>
        <taxon>Bacteria</taxon>
        <taxon>Pseudomonadati</taxon>
        <taxon>Pseudomonadota</taxon>
        <taxon>Betaproteobacteria</taxon>
        <taxon>Burkholderiales</taxon>
        <taxon>Alcaligenaceae</taxon>
        <taxon>Bordetella</taxon>
    </lineage>
</organism>
<accession>Q2L1J6</accession>
<reference key="1">
    <citation type="journal article" date="2006" name="J. Bacteriol.">
        <title>Comparison of the genome sequence of the poultry pathogen Bordetella avium with those of B. bronchiseptica, B. pertussis, and B. parapertussis reveals extensive diversity in surface structures associated with host interaction.</title>
        <authorList>
            <person name="Sebaihia M."/>
            <person name="Preston A."/>
            <person name="Maskell D.J."/>
            <person name="Kuzmiak H."/>
            <person name="Connell T.D."/>
            <person name="King N.D."/>
            <person name="Orndorff P.E."/>
            <person name="Miyamoto D.M."/>
            <person name="Thomson N.R."/>
            <person name="Harris D."/>
            <person name="Goble A."/>
            <person name="Lord A."/>
            <person name="Murphy L."/>
            <person name="Quail M.A."/>
            <person name="Rutter S."/>
            <person name="Squares R."/>
            <person name="Squares S."/>
            <person name="Woodward J."/>
            <person name="Parkhill J."/>
            <person name="Temple L.M."/>
        </authorList>
    </citation>
    <scope>NUCLEOTIDE SEQUENCE [LARGE SCALE GENOMIC DNA]</scope>
    <source>
        <strain>197N</strain>
    </source>
</reference>
<protein>
    <recommendedName>
        <fullName evidence="1">Argininosuccinate lyase</fullName>
        <shortName evidence="1">ASAL</shortName>
        <ecNumber evidence="1">4.3.2.1</ecNumber>
    </recommendedName>
    <alternativeName>
        <fullName evidence="1">Arginosuccinase</fullName>
    </alternativeName>
</protein>
<feature type="chain" id="PRO_0000240715" description="Argininosuccinate lyase">
    <location>
        <begin position="1"/>
        <end position="470"/>
    </location>
</feature>
<comment type="catalytic activity">
    <reaction evidence="1">
        <text>2-(N(omega)-L-arginino)succinate = fumarate + L-arginine</text>
        <dbReference type="Rhea" id="RHEA:24020"/>
        <dbReference type="ChEBI" id="CHEBI:29806"/>
        <dbReference type="ChEBI" id="CHEBI:32682"/>
        <dbReference type="ChEBI" id="CHEBI:57472"/>
        <dbReference type="EC" id="4.3.2.1"/>
    </reaction>
</comment>
<comment type="pathway">
    <text evidence="1">Amino-acid biosynthesis; L-arginine biosynthesis; L-arginine from L-ornithine and carbamoyl phosphate: step 3/3.</text>
</comment>
<comment type="subcellular location">
    <subcellularLocation>
        <location evidence="1">Cytoplasm</location>
    </subcellularLocation>
</comment>
<comment type="similarity">
    <text evidence="1">Belongs to the lyase 1 family. Argininosuccinate lyase subfamily.</text>
</comment>